<organism>
    <name type="scientific">Staphylococcus aureus (strain N315)</name>
    <dbReference type="NCBI Taxonomy" id="158879"/>
    <lineage>
        <taxon>Bacteria</taxon>
        <taxon>Bacillati</taxon>
        <taxon>Bacillota</taxon>
        <taxon>Bacilli</taxon>
        <taxon>Bacillales</taxon>
        <taxon>Staphylococcaceae</taxon>
        <taxon>Staphylococcus</taxon>
    </lineage>
</organism>
<comment type="function">
    <text evidence="1">The central subunit of the protein translocation channel SecYEG. Consists of two halves formed by TMs 1-5 and 6-10. These two domains form a lateral gate at the front which open onto the bilayer between TMs 2 and 7, and are clamped together by SecE at the back. The channel is closed by both a pore ring composed of hydrophobic SecY resides and a short helix (helix 2A) on the extracellular side of the membrane which forms a plug. The plug probably moves laterally to allow the channel to open. The ring and the pore may move independently.</text>
</comment>
<comment type="subunit">
    <text evidence="1">Component of the Sec protein translocase complex. Heterotrimer consisting of SecY, SecE and SecG subunits. The heterotrimers can form oligomers, although 1 heterotrimer is thought to be able to translocate proteins. Interacts with the ribosome. Interacts with SecDF, and other proteins may be involved. Interacts with SecA.</text>
</comment>
<comment type="subcellular location">
    <subcellularLocation>
        <location evidence="1">Cell membrane</location>
        <topology evidence="1">Multi-pass membrane protein</topology>
    </subcellularLocation>
</comment>
<comment type="similarity">
    <text evidence="1">Belongs to the SecY/SEC61-alpha family.</text>
</comment>
<sequence>MIQTLVNFFRTKEVRNKIFFTLAMLVIFKIGTYIPAPGVNPAAFDNPQGSQGATELLNTFGGGALKRFSIFAMGIVPYITASIVMQLLQMDIVPKFSEWAKQGEVGRRKLNNVTRYLAISLAFIQSIGMAFQFNNYLKGALIINQSIMSYLLIALVLTAGTAFLIWLGDQITQFGVGNGISIIIFAGILSTLPASLIQFGQTAFVGQEDTSLAWLKVLGLLVSLILLTVGAIYVLEAVRKIPIQYAKKQTAQRLGSQATYLPLKVNSAGVIPVIFAMAFFLLPRTLTLFYPDKEWAQNIANAANPSSNVGMVVYIVLIILFTYFYAFVQVNPEKMADNLKKQGSYVPGIRPGEQTKKYITKVLYRLTFVGSIFLAVISILPILATKFMGLPQSIQIGGTSLLIVIGVAIETMKSLEAQVSQKEYKGFGGR</sequence>
<proteinExistence type="evidence at protein level"/>
<evidence type="ECO:0000255" key="1">
    <source>
        <dbReference type="HAMAP-Rule" id="MF_01465"/>
    </source>
</evidence>
<keyword id="KW-1003">Cell membrane</keyword>
<keyword id="KW-0472">Membrane</keyword>
<keyword id="KW-0653">Protein transport</keyword>
<keyword id="KW-0811">Translocation</keyword>
<keyword id="KW-0812">Transmembrane</keyword>
<keyword id="KW-1133">Transmembrane helix</keyword>
<keyword id="KW-0813">Transport</keyword>
<feature type="chain" id="PRO_0000131742" description="Protein translocase subunit SecY">
    <location>
        <begin position="1"/>
        <end position="430"/>
    </location>
</feature>
<feature type="transmembrane region" description="Helical" evidence="1">
    <location>
        <begin position="18"/>
        <end position="38"/>
    </location>
</feature>
<feature type="transmembrane region" description="Helical" evidence="1">
    <location>
        <begin position="68"/>
        <end position="88"/>
    </location>
</feature>
<feature type="transmembrane region" description="Helical" evidence="1">
    <location>
        <begin position="117"/>
        <end position="137"/>
    </location>
</feature>
<feature type="transmembrane region" description="Helical" evidence="1">
    <location>
        <begin position="147"/>
        <end position="167"/>
    </location>
</feature>
<feature type="transmembrane region" description="Helical" evidence="1">
    <location>
        <begin position="179"/>
        <end position="199"/>
    </location>
</feature>
<feature type="transmembrane region" description="Helical" evidence="1">
    <location>
        <begin position="217"/>
        <end position="237"/>
    </location>
</feature>
<feature type="transmembrane region" description="Helical" evidence="1">
    <location>
        <begin position="269"/>
        <end position="289"/>
    </location>
</feature>
<feature type="transmembrane region" description="Helical" evidence="1">
    <location>
        <begin position="308"/>
        <end position="328"/>
    </location>
</feature>
<feature type="transmembrane region" description="Helical" evidence="1">
    <location>
        <begin position="368"/>
        <end position="388"/>
    </location>
</feature>
<feature type="transmembrane region" description="Helical" evidence="1">
    <location>
        <begin position="389"/>
        <end position="409"/>
    </location>
</feature>
<accession>Q7A468</accession>
<gene>
    <name evidence="1" type="primary">secY</name>
    <name type="ordered locus">SA2028</name>
</gene>
<dbReference type="EMBL" id="BA000018">
    <property type="protein sequence ID" value="BAB43322.1"/>
    <property type="molecule type" value="Genomic_DNA"/>
</dbReference>
<dbReference type="PIR" id="A90020">
    <property type="entry name" value="A90020"/>
</dbReference>
<dbReference type="RefSeq" id="WP_000616784.1">
    <property type="nucleotide sequence ID" value="NC_002745.2"/>
</dbReference>
<dbReference type="SMR" id="Q7A468"/>
<dbReference type="EnsemblBacteria" id="BAB43322">
    <property type="protein sequence ID" value="BAB43322"/>
    <property type="gene ID" value="BAB43322"/>
</dbReference>
<dbReference type="KEGG" id="sau:SA2028"/>
<dbReference type="HOGENOM" id="CLU_030313_0_1_9"/>
<dbReference type="GO" id="GO:0005886">
    <property type="term" value="C:plasma membrane"/>
    <property type="evidence" value="ECO:0007669"/>
    <property type="project" value="UniProtKB-SubCell"/>
</dbReference>
<dbReference type="GO" id="GO:0065002">
    <property type="term" value="P:intracellular protein transmembrane transport"/>
    <property type="evidence" value="ECO:0007669"/>
    <property type="project" value="UniProtKB-UniRule"/>
</dbReference>
<dbReference type="GO" id="GO:0006605">
    <property type="term" value="P:protein targeting"/>
    <property type="evidence" value="ECO:0007669"/>
    <property type="project" value="UniProtKB-UniRule"/>
</dbReference>
<dbReference type="GO" id="GO:0043952">
    <property type="term" value="P:protein transport by the Sec complex"/>
    <property type="evidence" value="ECO:0007669"/>
    <property type="project" value="UniProtKB-UniRule"/>
</dbReference>
<dbReference type="FunFam" id="1.10.3370.10:FF:000001">
    <property type="entry name" value="Preprotein translocase subunit SecY"/>
    <property type="match status" value="1"/>
</dbReference>
<dbReference type="Gene3D" id="1.10.3370.10">
    <property type="entry name" value="SecY subunit domain"/>
    <property type="match status" value="1"/>
</dbReference>
<dbReference type="HAMAP" id="MF_01465">
    <property type="entry name" value="SecY"/>
    <property type="match status" value="1"/>
</dbReference>
<dbReference type="InterPro" id="IPR026593">
    <property type="entry name" value="SecY"/>
</dbReference>
<dbReference type="InterPro" id="IPR002208">
    <property type="entry name" value="SecY/SEC61-alpha"/>
</dbReference>
<dbReference type="InterPro" id="IPR030659">
    <property type="entry name" value="SecY_CS"/>
</dbReference>
<dbReference type="InterPro" id="IPR023201">
    <property type="entry name" value="SecY_dom_sf"/>
</dbReference>
<dbReference type="NCBIfam" id="TIGR00967">
    <property type="entry name" value="3a0501s007"/>
    <property type="match status" value="1"/>
</dbReference>
<dbReference type="PANTHER" id="PTHR10906">
    <property type="entry name" value="SECY/SEC61-ALPHA FAMILY MEMBER"/>
    <property type="match status" value="1"/>
</dbReference>
<dbReference type="Pfam" id="PF00344">
    <property type="entry name" value="SecY"/>
    <property type="match status" value="1"/>
</dbReference>
<dbReference type="PIRSF" id="PIRSF004557">
    <property type="entry name" value="SecY"/>
    <property type="match status" value="1"/>
</dbReference>
<dbReference type="PRINTS" id="PR00303">
    <property type="entry name" value="SECYTRNLCASE"/>
</dbReference>
<dbReference type="SUPFAM" id="SSF103491">
    <property type="entry name" value="Preprotein translocase SecY subunit"/>
    <property type="match status" value="1"/>
</dbReference>
<dbReference type="PROSITE" id="PS00755">
    <property type="entry name" value="SECY_1"/>
    <property type="match status" value="1"/>
</dbReference>
<dbReference type="PROSITE" id="PS00756">
    <property type="entry name" value="SECY_2"/>
    <property type="match status" value="1"/>
</dbReference>
<protein>
    <recommendedName>
        <fullName evidence="1">Protein translocase subunit SecY</fullName>
    </recommendedName>
</protein>
<name>SECY_STAAN</name>
<reference key="1">
    <citation type="journal article" date="2001" name="Lancet">
        <title>Whole genome sequencing of meticillin-resistant Staphylococcus aureus.</title>
        <authorList>
            <person name="Kuroda M."/>
            <person name="Ohta T."/>
            <person name="Uchiyama I."/>
            <person name="Baba T."/>
            <person name="Yuzawa H."/>
            <person name="Kobayashi I."/>
            <person name="Cui L."/>
            <person name="Oguchi A."/>
            <person name="Aoki K."/>
            <person name="Nagai Y."/>
            <person name="Lian J.-Q."/>
            <person name="Ito T."/>
            <person name="Kanamori M."/>
            <person name="Matsumaru H."/>
            <person name="Maruyama A."/>
            <person name="Murakami H."/>
            <person name="Hosoyama A."/>
            <person name="Mizutani-Ui Y."/>
            <person name="Takahashi N.K."/>
            <person name="Sawano T."/>
            <person name="Inoue R."/>
            <person name="Kaito C."/>
            <person name="Sekimizu K."/>
            <person name="Hirakawa H."/>
            <person name="Kuhara S."/>
            <person name="Goto S."/>
            <person name="Yabuzaki J."/>
            <person name="Kanehisa M."/>
            <person name="Yamashita A."/>
            <person name="Oshima K."/>
            <person name="Furuya K."/>
            <person name="Yoshino C."/>
            <person name="Shiba T."/>
            <person name="Hattori M."/>
            <person name="Ogasawara N."/>
            <person name="Hayashi H."/>
            <person name="Hiramatsu K."/>
        </authorList>
    </citation>
    <scope>NUCLEOTIDE SEQUENCE [LARGE SCALE GENOMIC DNA]</scope>
    <source>
        <strain>N315</strain>
    </source>
</reference>
<reference key="2">
    <citation type="submission" date="2007-10" db="UniProtKB">
        <title>Shotgun proteomic analysis of total and membrane protein extracts of S. aureus strain N315.</title>
        <authorList>
            <person name="Vaezzadeh A.R."/>
            <person name="Deshusses J."/>
            <person name="Lescuyer P."/>
            <person name="Hochstrasser D.F."/>
        </authorList>
    </citation>
    <scope>IDENTIFICATION BY MASS SPECTROMETRY [LARGE SCALE ANALYSIS]</scope>
    <source>
        <strain>N315</strain>
    </source>
</reference>